<dbReference type="EC" id="2.7.10.1"/>
<dbReference type="EMBL" id="X71424">
    <property type="protein sequence ID" value="CAA50555.1"/>
    <property type="molecule type" value="mRNA"/>
</dbReference>
<dbReference type="PIR" id="S57846">
    <property type="entry name" value="S57846"/>
</dbReference>
<dbReference type="RefSeq" id="NP_776389.1">
    <property type="nucleotide sequence ID" value="NM_173964.2"/>
</dbReference>
<dbReference type="SMR" id="Q06807"/>
<dbReference type="FunCoup" id="Q06807">
    <property type="interactions" value="658"/>
</dbReference>
<dbReference type="STRING" id="9913.ENSBTAP00000026836"/>
<dbReference type="GlyCosmos" id="Q06807">
    <property type="glycosylation" value="1 site, No reported glycans"/>
</dbReference>
<dbReference type="GlyGen" id="Q06807">
    <property type="glycosylation" value="1 site"/>
</dbReference>
<dbReference type="PaxDb" id="9913-ENSBTAP00000026836"/>
<dbReference type="PeptideAtlas" id="Q06807"/>
<dbReference type="GeneID" id="280939"/>
<dbReference type="KEGG" id="bta:280939"/>
<dbReference type="CTD" id="7010"/>
<dbReference type="VEuPathDB" id="HostDB:ENSBTAG00000020148"/>
<dbReference type="eggNOG" id="KOG0200">
    <property type="taxonomic scope" value="Eukaryota"/>
</dbReference>
<dbReference type="HOGENOM" id="CLU_008888_0_0_1"/>
<dbReference type="InParanoid" id="Q06807"/>
<dbReference type="OMA" id="APYNIKF"/>
<dbReference type="OrthoDB" id="1668230at2759"/>
<dbReference type="TreeFam" id="TF317568"/>
<dbReference type="BRENDA" id="2.7.10.1">
    <property type="organism ID" value="908"/>
</dbReference>
<dbReference type="Reactome" id="R-BTA-210993">
    <property type="pathway name" value="Tie2 Signaling"/>
</dbReference>
<dbReference type="Reactome" id="R-BTA-5673001">
    <property type="pathway name" value="RAF/MAP kinase cascade"/>
</dbReference>
<dbReference type="Proteomes" id="UP000009136">
    <property type="component" value="Chromosome 8"/>
</dbReference>
<dbReference type="Bgee" id="ENSBTAG00000020148">
    <property type="expression patterns" value="Expressed in lung and 104 other cell types or tissues"/>
</dbReference>
<dbReference type="GO" id="GO:0005737">
    <property type="term" value="C:cytoplasm"/>
    <property type="evidence" value="ECO:0007669"/>
    <property type="project" value="UniProtKB-KW"/>
</dbReference>
<dbReference type="GO" id="GO:0005856">
    <property type="term" value="C:cytoskeleton"/>
    <property type="evidence" value="ECO:0007669"/>
    <property type="project" value="UniProtKB-SubCell"/>
</dbReference>
<dbReference type="GO" id="GO:0005576">
    <property type="term" value="C:extracellular region"/>
    <property type="evidence" value="ECO:0007669"/>
    <property type="project" value="UniProtKB-SubCell"/>
</dbReference>
<dbReference type="GO" id="GO:0005925">
    <property type="term" value="C:focal adhesion"/>
    <property type="evidence" value="ECO:0007669"/>
    <property type="project" value="UniProtKB-SubCell"/>
</dbReference>
<dbReference type="GO" id="GO:0005886">
    <property type="term" value="C:plasma membrane"/>
    <property type="evidence" value="ECO:0000318"/>
    <property type="project" value="GO_Central"/>
</dbReference>
<dbReference type="GO" id="GO:0043235">
    <property type="term" value="C:receptor complex"/>
    <property type="evidence" value="ECO:0000318"/>
    <property type="project" value="GO_Central"/>
</dbReference>
<dbReference type="GO" id="GO:0005524">
    <property type="term" value="F:ATP binding"/>
    <property type="evidence" value="ECO:0007669"/>
    <property type="project" value="UniProtKB-KW"/>
</dbReference>
<dbReference type="GO" id="GO:0004714">
    <property type="term" value="F:transmembrane receptor protein tyrosine kinase activity"/>
    <property type="evidence" value="ECO:0000250"/>
    <property type="project" value="UniProtKB"/>
</dbReference>
<dbReference type="GO" id="GO:0001525">
    <property type="term" value="P:angiogenesis"/>
    <property type="evidence" value="ECO:0000250"/>
    <property type="project" value="UniProtKB"/>
</dbReference>
<dbReference type="GO" id="GO:0030154">
    <property type="term" value="P:cell differentiation"/>
    <property type="evidence" value="ECO:0007669"/>
    <property type="project" value="UniProtKB-ARBA"/>
</dbReference>
<dbReference type="GO" id="GO:0007169">
    <property type="term" value="P:cell surface receptor protein tyrosine kinase signaling pathway"/>
    <property type="evidence" value="ECO:0000250"/>
    <property type="project" value="UniProtKB"/>
</dbReference>
<dbReference type="GO" id="GO:0001935">
    <property type="term" value="P:endothelial cell proliferation"/>
    <property type="evidence" value="ECO:0000250"/>
    <property type="project" value="UniProtKB"/>
</dbReference>
<dbReference type="GO" id="GO:0007507">
    <property type="term" value="P:heart development"/>
    <property type="evidence" value="ECO:0000250"/>
    <property type="project" value="UniProtKB"/>
</dbReference>
<dbReference type="GO" id="GO:0060347">
    <property type="term" value="P:heart trabecula formation"/>
    <property type="evidence" value="ECO:0000250"/>
    <property type="project" value="UniProtKB"/>
</dbReference>
<dbReference type="GO" id="GO:0016525">
    <property type="term" value="P:negative regulation of angiogenesis"/>
    <property type="evidence" value="ECO:0000250"/>
    <property type="project" value="UniProtKB"/>
</dbReference>
<dbReference type="GO" id="GO:2000352">
    <property type="term" value="P:negative regulation of endothelial cell apoptotic process"/>
    <property type="evidence" value="ECO:0000250"/>
    <property type="project" value="UniProtKB"/>
</dbReference>
<dbReference type="GO" id="GO:0045766">
    <property type="term" value="P:positive regulation of angiogenesis"/>
    <property type="evidence" value="ECO:0000250"/>
    <property type="project" value="UniProtKB"/>
</dbReference>
<dbReference type="GO" id="GO:0010595">
    <property type="term" value="P:positive regulation of endothelial cell migration"/>
    <property type="evidence" value="ECO:0000250"/>
    <property type="project" value="UniProtKB"/>
</dbReference>
<dbReference type="GO" id="GO:0070374">
    <property type="term" value="P:positive regulation of ERK1 and ERK2 cascade"/>
    <property type="evidence" value="ECO:0000250"/>
    <property type="project" value="UniProtKB"/>
</dbReference>
<dbReference type="GO" id="GO:0051894">
    <property type="term" value="P:positive regulation of focal adhesion assembly"/>
    <property type="evidence" value="ECO:0000250"/>
    <property type="project" value="UniProtKB"/>
</dbReference>
<dbReference type="GO" id="GO:1902533">
    <property type="term" value="P:positive regulation of intracellular signal transduction"/>
    <property type="evidence" value="ECO:0000250"/>
    <property type="project" value="UniProtKB"/>
</dbReference>
<dbReference type="GO" id="GO:0043410">
    <property type="term" value="P:positive regulation of MAPK cascade"/>
    <property type="evidence" value="ECO:0000318"/>
    <property type="project" value="GO_Central"/>
</dbReference>
<dbReference type="GO" id="GO:0051897">
    <property type="term" value="P:positive regulation of phosphatidylinositol 3-kinase/protein kinase B signal transduction"/>
    <property type="evidence" value="ECO:0000250"/>
    <property type="project" value="UniProtKB"/>
</dbReference>
<dbReference type="GO" id="GO:0032878">
    <property type="term" value="P:regulation of establishment or maintenance of cell polarity"/>
    <property type="evidence" value="ECO:0000250"/>
    <property type="project" value="UniProtKB"/>
</dbReference>
<dbReference type="GO" id="GO:0002040">
    <property type="term" value="P:sprouting angiogenesis"/>
    <property type="evidence" value="ECO:0000250"/>
    <property type="project" value="UniProtKB"/>
</dbReference>
<dbReference type="GO" id="GO:0034446">
    <property type="term" value="P:substrate adhesion-dependent cell spreading"/>
    <property type="evidence" value="ECO:0000250"/>
    <property type="project" value="UniProtKB"/>
</dbReference>
<dbReference type="GO" id="GO:0048014">
    <property type="term" value="P:Tie signaling pathway"/>
    <property type="evidence" value="ECO:0000250"/>
    <property type="project" value="UniProtKB"/>
</dbReference>
<dbReference type="CDD" id="cd00055">
    <property type="entry name" value="EGF_Lam"/>
    <property type="match status" value="2"/>
</dbReference>
<dbReference type="CDD" id="cd00063">
    <property type="entry name" value="FN3"/>
    <property type="match status" value="2"/>
</dbReference>
<dbReference type="CDD" id="cd20964">
    <property type="entry name" value="IgI_Tie2"/>
    <property type="match status" value="1"/>
</dbReference>
<dbReference type="CDD" id="cd05088">
    <property type="entry name" value="PTKc_Tie2"/>
    <property type="match status" value="1"/>
</dbReference>
<dbReference type="FunFam" id="2.60.40.10:FF:000397">
    <property type="entry name" value="angiopoietin-1 receptor isoform X1"/>
    <property type="match status" value="1"/>
</dbReference>
<dbReference type="FunFam" id="2.60.40.10:FF:000407">
    <property type="entry name" value="angiopoietin-1 receptor isoform X1"/>
    <property type="match status" value="1"/>
</dbReference>
<dbReference type="FunFam" id="2.60.40.10:FF:000406">
    <property type="entry name" value="angiopoietin-1 receptor isoform X2"/>
    <property type="match status" value="1"/>
</dbReference>
<dbReference type="FunFam" id="3.30.200.20:FF:000113">
    <property type="entry name" value="Putative tyrosine-protein kinase receptor Tie-1"/>
    <property type="match status" value="1"/>
</dbReference>
<dbReference type="FunFam" id="2.60.40.10:FF:000388">
    <property type="entry name" value="TEK receptor tyrosine kinase"/>
    <property type="match status" value="1"/>
</dbReference>
<dbReference type="FunFam" id="2.60.40.10:FF:000391">
    <property type="entry name" value="TEK receptor tyrosine kinase"/>
    <property type="match status" value="1"/>
</dbReference>
<dbReference type="FunFam" id="2.60.40.10:FF:000441">
    <property type="entry name" value="TEK receptor tyrosine kinase"/>
    <property type="match status" value="1"/>
</dbReference>
<dbReference type="FunFam" id="1.10.510.10:FF:000123">
    <property type="entry name" value="Tyrosine-protein kinase receptor Tie-1"/>
    <property type="match status" value="1"/>
</dbReference>
<dbReference type="FunFam" id="2.170.300.10:FF:000003">
    <property type="entry name" value="tyrosine-protein kinase receptor Tie-1 isoform X1"/>
    <property type="match status" value="1"/>
</dbReference>
<dbReference type="Gene3D" id="2.60.40.10">
    <property type="entry name" value="Immunoglobulins"/>
    <property type="match status" value="6"/>
</dbReference>
<dbReference type="Gene3D" id="3.30.200.20">
    <property type="entry name" value="Phosphorylase Kinase, domain 1"/>
    <property type="match status" value="1"/>
</dbReference>
<dbReference type="Gene3D" id="2.170.300.10">
    <property type="entry name" value="Tie2 ligand-binding domain superfamily"/>
    <property type="match status" value="1"/>
</dbReference>
<dbReference type="Gene3D" id="1.10.510.10">
    <property type="entry name" value="Transferase(Phosphotransferase) domain 1"/>
    <property type="match status" value="1"/>
</dbReference>
<dbReference type="InterPro" id="IPR000742">
    <property type="entry name" value="EGF-like_dom"/>
</dbReference>
<dbReference type="InterPro" id="IPR003961">
    <property type="entry name" value="FN3_dom"/>
</dbReference>
<dbReference type="InterPro" id="IPR036116">
    <property type="entry name" value="FN3_sf"/>
</dbReference>
<dbReference type="InterPro" id="IPR007110">
    <property type="entry name" value="Ig-like_dom"/>
</dbReference>
<dbReference type="InterPro" id="IPR036179">
    <property type="entry name" value="Ig-like_dom_sf"/>
</dbReference>
<dbReference type="InterPro" id="IPR013783">
    <property type="entry name" value="Ig-like_fold"/>
</dbReference>
<dbReference type="InterPro" id="IPR011009">
    <property type="entry name" value="Kinase-like_dom_sf"/>
</dbReference>
<dbReference type="InterPro" id="IPR002049">
    <property type="entry name" value="LE_dom"/>
</dbReference>
<dbReference type="InterPro" id="IPR000719">
    <property type="entry name" value="Prot_kinase_dom"/>
</dbReference>
<dbReference type="InterPro" id="IPR017441">
    <property type="entry name" value="Protein_kinase_ATP_BS"/>
</dbReference>
<dbReference type="InterPro" id="IPR050122">
    <property type="entry name" value="RTK"/>
</dbReference>
<dbReference type="InterPro" id="IPR001245">
    <property type="entry name" value="Ser-Thr/Tyr_kinase_cat_dom"/>
</dbReference>
<dbReference type="InterPro" id="IPR018941">
    <property type="entry name" value="Tyr_kin_Tie2_Ig-like_dom-1_N"/>
</dbReference>
<dbReference type="InterPro" id="IPR008266">
    <property type="entry name" value="Tyr_kinase_AS"/>
</dbReference>
<dbReference type="InterPro" id="IPR020635">
    <property type="entry name" value="Tyr_kinase_cat_dom"/>
</dbReference>
<dbReference type="PANTHER" id="PTHR24416:SF125">
    <property type="entry name" value="ANGIOPOIETIN-1 RECEPTOR"/>
    <property type="match status" value="1"/>
</dbReference>
<dbReference type="PANTHER" id="PTHR24416">
    <property type="entry name" value="TYROSINE-PROTEIN KINASE RECEPTOR"/>
    <property type="match status" value="1"/>
</dbReference>
<dbReference type="Pfam" id="PF00041">
    <property type="entry name" value="fn3"/>
    <property type="match status" value="2"/>
</dbReference>
<dbReference type="Pfam" id="PF10430">
    <property type="entry name" value="Ig_Tie2_1"/>
    <property type="match status" value="1"/>
</dbReference>
<dbReference type="Pfam" id="PF07714">
    <property type="entry name" value="PK_Tyr_Ser-Thr"/>
    <property type="match status" value="1"/>
</dbReference>
<dbReference type="PIRSF" id="PIRSF000615">
    <property type="entry name" value="TyrPK_CSF1-R"/>
    <property type="match status" value="1"/>
</dbReference>
<dbReference type="PRINTS" id="PR00109">
    <property type="entry name" value="TYRKINASE"/>
</dbReference>
<dbReference type="SMART" id="SM00181">
    <property type="entry name" value="EGF"/>
    <property type="match status" value="2"/>
</dbReference>
<dbReference type="SMART" id="SM00060">
    <property type="entry name" value="FN3"/>
    <property type="match status" value="3"/>
</dbReference>
<dbReference type="SMART" id="SM00220">
    <property type="entry name" value="S_TKc"/>
    <property type="match status" value="1"/>
</dbReference>
<dbReference type="SMART" id="SM00219">
    <property type="entry name" value="TyrKc"/>
    <property type="match status" value="1"/>
</dbReference>
<dbReference type="SUPFAM" id="SSF49265">
    <property type="entry name" value="Fibronectin type III"/>
    <property type="match status" value="2"/>
</dbReference>
<dbReference type="SUPFAM" id="SSF48726">
    <property type="entry name" value="Immunoglobulin"/>
    <property type="match status" value="1"/>
</dbReference>
<dbReference type="SUPFAM" id="SSF56112">
    <property type="entry name" value="Protein kinase-like (PK-like)"/>
    <property type="match status" value="1"/>
</dbReference>
<dbReference type="PROSITE" id="PS00022">
    <property type="entry name" value="EGF_1"/>
    <property type="match status" value="3"/>
</dbReference>
<dbReference type="PROSITE" id="PS01186">
    <property type="entry name" value="EGF_2"/>
    <property type="match status" value="2"/>
</dbReference>
<dbReference type="PROSITE" id="PS50026">
    <property type="entry name" value="EGF_3"/>
    <property type="match status" value="1"/>
</dbReference>
<dbReference type="PROSITE" id="PS50853">
    <property type="entry name" value="FN3"/>
    <property type="match status" value="3"/>
</dbReference>
<dbReference type="PROSITE" id="PS50835">
    <property type="entry name" value="IG_LIKE"/>
    <property type="match status" value="1"/>
</dbReference>
<dbReference type="PROSITE" id="PS00107">
    <property type="entry name" value="PROTEIN_KINASE_ATP"/>
    <property type="match status" value="1"/>
</dbReference>
<dbReference type="PROSITE" id="PS50011">
    <property type="entry name" value="PROTEIN_KINASE_DOM"/>
    <property type="match status" value="1"/>
</dbReference>
<dbReference type="PROSITE" id="PS00109">
    <property type="entry name" value="PROTEIN_KINASE_TYR"/>
    <property type="match status" value="1"/>
</dbReference>
<sequence>MDSLAGLVLCGVSLLLSATVDGAMDLILINSLPLVSDAETSLTCIASGWRPHEPITIGRDFEALMNQHQDPLEVTQDATREWAKKVVWKREKASKINGAYFCEGRVRGQAIRIRTMKMRQQASFLPATLTMTVDRGDNVNISFKKVLIKEEDAVIYKNGSFIHSVPRHEVPDILEVQVPHAQPQDAGVYSARYIGGNLFTSAFTRLIVRRCEAQKWGPECNRICTACMNNGICHEDTGECICPPGFMGRTCEKACEPHTFGRTCKERCSEPEGCKSFVFCLPDPYGCSCATGWKGLQCNEACQPGYYGPDCKLRCSCTNGEKCDRFQGCLCSPGRQGLQCEKEGVPRMTPKIEDLPDHIEVNSGKFNPICKASGWPRPANEEMTLVKPDGTVLRPKDFNHTGHLSVATFTINRILPPDSGVWVCSVNTVSGMVEKPFNISVKVLPKPLNAPKVIDTGHNFAVINISSEPYFGDGPIKSKKLLYKPVNHYEAWRHIQVTNEIVTLNYLEPRTEYELCVQLVRRGEGGEGHPGPVRRFTTASIGLPPPRGLSLLPKSQTTLNLTWQPIFPSSEDDFYVEVERRSVQMNSDQQNIKVPGNLTSVLLNNLHPREQYIVRARVNTKAQGEWSEDLIAWTLSDIVPPQPENIKIFNITDSSAVISWTILDGYSISAIIIRYKVQGKNEDQHIDVKIKNATITQYQLKGLEPQTVYQVDIFAENNIGSSNPTSSHELTTLSESQAPADLGGRKMLLIAILGSAGMTCLTVLLAFLIMLQLKRANVQRRMAQAFQNVREEPAVQFNSGTLALNRKAKNNPDPTIYPVLDWNDIKFQDVIGEGNFGQVLKARIKKDGLRMDAAIKRMKEYASKDDHRDFAGELEVLCKLGHHPNIINLLGACEHRGYLYLAIEYAPHGNLLDFLRKSRVLETDPAFAIANSTASTLSSQQLLHFAADVARGMDYLSQKQFIHRDLAARNILVGENYVAKIADFGLSRGQEVYVKKTMGRLPVRWMAIESLNYSVYTTNSDVWSYGVLLWEIVSLGGTPYCGMTCAELYEKLPQGYRLEKPLNCDDEVYDLMRQCWREKPYERPSFAQILVSLNRMLEERKTYVNTTLYEKFTYAGIDCSAEEAA</sequence>
<protein>
    <recommendedName>
        <fullName>Angiopoietin-1 receptor</fullName>
        <ecNumber>2.7.10.1</ecNumber>
    </recommendedName>
    <alternativeName>
        <fullName>Endothelial tyrosine kinase</fullName>
    </alternativeName>
    <alternativeName>
        <fullName>Tyrosine kinase with Ig and EGF homology domains-2</fullName>
    </alternativeName>
    <alternativeName>
        <fullName>Tyrosine-protein kinase receptor TIE-2</fullName>
    </alternativeName>
    <cdAntigenName>CD202b</cdAntigenName>
</protein>
<gene>
    <name type="primary">TEK</name>
    <name type="synonym">TIE-2</name>
    <name type="synonym">TIE2</name>
</gene>
<proteinExistence type="evidence at transcript level"/>
<reference key="1">
    <citation type="journal article" date="1993" name="Proc. Natl. Acad. Sci. U.S.A.">
        <title>Tie-1 and tie-2 define another class of putative receptor tyrosine kinase genes expressed in early embryonic vascular system.</title>
        <authorList>
            <person name="Sato T.N."/>
            <person name="Qin Y."/>
            <person name="Kozak C.A."/>
            <person name="Andus K.L."/>
        </authorList>
    </citation>
    <scope>NUCLEOTIDE SEQUENCE [MRNA]</scope>
    <source>
        <tissue>Endothelial cell</tissue>
    </source>
</reference>
<comment type="function">
    <text evidence="1">Tyrosine-protein kinase that acts as a cell-surface receptor for ANGPT1, ANGPT2 and ANGPT4 and regulates angiogenesis, endothelial cell survival, proliferation, migration, adhesion and cell spreading, reorganization of the actin cytoskeleton, but also maintenance of vascular quiescence. Has anti-inflammatory effects by preventing the leakage of pro-inflammatory plasma proteins and leukocytes from blood vessels. Required for normal angiogenesis and heart development during embryogenesis. Required for post-natal hematopoiesis. After birth, activates or inhibits angiogenesis, depending on the context. Inhibits angiogenesis and promotes vascular stability in quiescent vessels, where endothelial cells have tight contacts. In quiescent vessels, ANGPT1 oligomers recruit TEK to cell-cell contacts, forming complexes with TEK molecules from adjoining cells, and this leads to preferential activation of phosphatidylinositol 3-kinase and the AKT1 signaling cascades. In migrating endothelial cells that lack cell-cell adhesions, ANGT1 recruits TEK to contacts with the extracellular matrix, leading to the formation of focal adhesion complexes, activation of PTK2/FAK and of the downstream kinases MAPK1/ERK2 and MAPK3/ERK1, and ultimately to the stimulation of sprouting angiogenesis. ANGPT1 signaling triggers receptor dimerization and autophosphorylation at specific tyrosine residues that then serve as binding sites for scaffold proteins and effectors. Signaling is modulated by ANGPT2 that has lower affinity for TEK, can promote TEK autophosphorylation in the absence of ANGPT1, but inhibits ANGPT1-mediated signaling by competing for the same binding site. Signaling is also modulated by formation of heterodimers with TIE1, and by proteolytic processing that gives rise to a soluble TEK extracellular domain. The soluble extracellular domain modulates signaling by functioning as decoy receptor for angiopoietins. TEK phosphorylates DOK2, GRB7, GRB14, PIK3R1, SHC1 and TIE1 (By similarity).</text>
</comment>
<comment type="catalytic activity">
    <reaction evidence="7">
        <text>L-tyrosyl-[protein] + ATP = O-phospho-L-tyrosyl-[protein] + ADP + H(+)</text>
        <dbReference type="Rhea" id="RHEA:10596"/>
        <dbReference type="Rhea" id="RHEA-COMP:10136"/>
        <dbReference type="Rhea" id="RHEA-COMP:20101"/>
        <dbReference type="ChEBI" id="CHEBI:15378"/>
        <dbReference type="ChEBI" id="CHEBI:30616"/>
        <dbReference type="ChEBI" id="CHEBI:46858"/>
        <dbReference type="ChEBI" id="CHEBI:61978"/>
        <dbReference type="ChEBI" id="CHEBI:456216"/>
        <dbReference type="EC" id="2.7.10.1"/>
    </reaction>
</comment>
<comment type="activity regulation">
    <text evidence="1">Angiopoietin binding leads to receptor dimerization and activation by autophosphorylation at Tyr-993 on the kinase activation loop.</text>
</comment>
<comment type="subunit">
    <text evidence="1">Homodimer. Heterodimer with TIE1. Interacts with ANGPT1, ANGPT2 and ANGPT4. At cell-cell contacts in quiescent cells, forms a signaling complex composed of ANGPT1 plus TEK molecules from two adjoining cells. In the absence of endothelial cell-cell contacts, interaction with ANGPT1 mediates contacts with the extracellular matrix. Interacts (tyrosine phosphorylated) with TNIP2. Interacts (tyrosine phosphorylated) with SHC1 (via SH2 domain) (By similarity). Interacts with PTPRB; this promotes endothelial cell-cell adhesion. Interacts with DOK2, GRB2, GRB7, GRB14, PIK3R1 and PTPN11/SHP2. Colocalizes with DOK2 at contacts with the extracellular matrix in migrating cells (By similarity).</text>
</comment>
<comment type="subcellular location">
    <subcellularLocation>
        <location evidence="1">Cell membrane</location>
        <topology evidence="1">Single-pass type I membrane protein</topology>
    </subcellularLocation>
    <subcellularLocation>
        <location evidence="1">Cell junction</location>
    </subcellularLocation>
    <subcellularLocation>
        <location evidence="1">Cell junction</location>
        <location evidence="1">Focal adhesion</location>
    </subcellularLocation>
    <subcellularLocation>
        <location evidence="1">Cytoplasm</location>
        <location evidence="1">Cytoskeleton</location>
    </subcellularLocation>
    <subcellularLocation>
        <location evidence="1">Secreted</location>
    </subcellularLocation>
    <text evidence="1">Recruited to cell-cell contacts in quiescent endothelial cells. Colocalizes with the actin cytoskeleton and at actin stress fibers during cell spreading. Recruited to the lower surface of migrating cells, especially the rear end of the cell. Proteolytic processing gives rise to a soluble extracellular domain that is secreted (By similarity).</text>
</comment>
<comment type="tissue specificity">
    <text>Specifically expressed in developing vascular endothelial cells.</text>
</comment>
<comment type="domain">
    <text evidence="1">The soluble extracellular domain is functionally active in angiopoietin binding and can modulate the activity of the membrane-bound form by competing for angiopoietins.</text>
</comment>
<comment type="PTM">
    <text evidence="1">Proteolytic processing leads to the shedding of the extracellular domain (soluble TIE-2 alias sTIE-2).</text>
</comment>
<comment type="PTM">
    <text evidence="1">Autophosphorylated on tyrosine residues in response to ligand binding. Autophosphorylation occurs in trans, i.e. one subunit of the dimeric receptor phosphorylates tyrosine residues on the other subunit. Autophosphorylation occurs in a sequential manner, where Tyr-993 in the kinase activation loop is phosphorylated first, followed by autophosphorylation at Tyr-1109 and at additional tyrosine residues. ANGPT1-induced phosphorylation is impaired during hypoxia, due to increased expression of ANGPT2 (By similarity). Phosphorylation is important for interaction with GRB14, PIK3R1 and PTPN11. Phosphorylation at Tyr-1103 is important for interaction with GRB2 and GRB7. Phosphorylation at Tyr-1109 is important for interaction with DOK2 and for coupling to downstream signal transduction pathways in endothelial cells. Dephosphorylated by PTPRB (By similarity).</text>
</comment>
<comment type="PTM">
    <text evidence="1">Ubiquitinated. The phosphorylated receptor is ubiquitinated and internalized, leading to its degradation (By similarity).</text>
</comment>
<comment type="similarity">
    <text evidence="5">Belongs to the protein kinase superfamily. Tyr protein kinase family. Tie subfamily.</text>
</comment>
<feature type="signal peptide" evidence="1">
    <location>
        <begin position="1"/>
        <end position="22"/>
    </location>
</feature>
<feature type="chain" id="PRO_0000024473" description="Angiopoietin-1 receptor">
    <location>
        <begin position="23"/>
        <end position="1125"/>
    </location>
</feature>
<feature type="topological domain" description="Extracellular" evidence="3">
    <location>
        <begin position="23"/>
        <end position="748"/>
    </location>
</feature>
<feature type="transmembrane region" description="Helical" evidence="3">
    <location>
        <begin position="749"/>
        <end position="769"/>
    </location>
</feature>
<feature type="topological domain" description="Cytoplasmic" evidence="3">
    <location>
        <begin position="770"/>
        <end position="1125"/>
    </location>
</feature>
<feature type="domain" description="Ig-like C2-type 1">
    <location>
        <begin position="44"/>
        <end position="123"/>
    </location>
</feature>
<feature type="domain" description="EGF-like 1" evidence="4">
    <location>
        <begin position="210"/>
        <end position="252"/>
    </location>
</feature>
<feature type="domain" description="EGF-like 2" evidence="4">
    <location>
        <begin position="254"/>
        <end position="299"/>
    </location>
</feature>
<feature type="domain" description="EGF-like 3" evidence="4">
    <location>
        <begin position="301"/>
        <end position="341"/>
    </location>
</feature>
<feature type="domain" description="Ig-like C2-type 2">
    <location>
        <begin position="350"/>
        <end position="440"/>
    </location>
</feature>
<feature type="domain" description="Fibronectin type-III 1" evidence="6">
    <location>
        <begin position="447"/>
        <end position="541"/>
    </location>
</feature>
<feature type="domain" description="Fibronectin type-III 2" evidence="6">
    <location>
        <begin position="545"/>
        <end position="637"/>
    </location>
</feature>
<feature type="domain" description="Fibronectin type-III 3" evidence="6">
    <location>
        <begin position="642"/>
        <end position="735"/>
    </location>
</feature>
<feature type="domain" description="Protein kinase" evidence="5">
    <location>
        <begin position="825"/>
        <end position="1097"/>
    </location>
</feature>
<feature type="active site" description="Proton acceptor" evidence="5 7">
    <location>
        <position position="965"/>
    </location>
</feature>
<feature type="binding site" evidence="5">
    <location>
        <begin position="831"/>
        <end position="839"/>
    </location>
    <ligand>
        <name>ATP</name>
        <dbReference type="ChEBI" id="CHEBI:30616"/>
    </ligand>
</feature>
<feature type="binding site" evidence="5">
    <location>
        <position position="856"/>
    </location>
    <ligand>
        <name>ATP</name>
        <dbReference type="ChEBI" id="CHEBI:30616"/>
    </ligand>
</feature>
<feature type="modified residue" description="Phosphotyrosine; by autocatalysis" evidence="2">
    <location>
        <position position="861"/>
    </location>
</feature>
<feature type="modified residue" description="Phosphotyrosine; by autocatalysis" evidence="2">
    <location>
        <position position="993"/>
    </location>
</feature>
<feature type="modified residue" description="Phosphotyrosine; by autocatalysis" evidence="2">
    <location>
        <position position="1103"/>
    </location>
</feature>
<feature type="modified residue" description="Phosphotyrosine; by autocatalysis" evidence="2">
    <location>
        <position position="1109"/>
    </location>
</feature>
<feature type="glycosylation site" description="N-linked (GlcNAc...) asparagine" evidence="3">
    <location>
        <position position="158"/>
    </location>
</feature>
<feature type="disulfide bond" evidence="1">
    <location>
        <begin position="44"/>
        <end position="102"/>
    </location>
</feature>
<feature type="disulfide bond" evidence="1">
    <location>
        <begin position="211"/>
        <end position="220"/>
    </location>
</feature>
<feature type="disulfide bond" evidence="1">
    <location>
        <begin position="224"/>
        <end position="233"/>
    </location>
</feature>
<feature type="disulfide bond" evidence="1">
    <location>
        <begin position="227"/>
        <end position="240"/>
    </location>
</feature>
<feature type="disulfide bond" evidence="1">
    <location>
        <begin position="242"/>
        <end position="251"/>
    </location>
</feature>
<feature type="disulfide bond" evidence="1">
    <location>
        <begin position="255"/>
        <end position="264"/>
    </location>
</feature>
<feature type="disulfide bond" evidence="1">
    <location>
        <begin position="268"/>
        <end position="274"/>
    </location>
</feature>
<feature type="disulfide bond" evidence="1">
    <location>
        <begin position="280"/>
        <end position="287"/>
    </location>
</feature>
<feature type="disulfide bond" evidence="1">
    <location>
        <begin position="289"/>
        <end position="298"/>
    </location>
</feature>
<feature type="disulfide bond" evidence="1">
    <location>
        <begin position="302"/>
        <end position="311"/>
    </location>
</feature>
<feature type="disulfide bond" evidence="1">
    <location>
        <begin position="315"/>
        <end position="323"/>
    </location>
</feature>
<feature type="disulfide bond" evidence="1">
    <location>
        <begin position="317"/>
        <end position="329"/>
    </location>
</feature>
<feature type="disulfide bond" evidence="1">
    <location>
        <begin position="331"/>
        <end position="340"/>
    </location>
</feature>
<feature type="disulfide bond" evidence="1">
    <location>
        <begin position="370"/>
        <end position="424"/>
    </location>
</feature>
<name>TIE2_BOVIN</name>
<evidence type="ECO:0000250" key="1"/>
<evidence type="ECO:0000250" key="2">
    <source>
        <dbReference type="UniProtKB" id="Q02763"/>
    </source>
</evidence>
<evidence type="ECO:0000255" key="3"/>
<evidence type="ECO:0000255" key="4">
    <source>
        <dbReference type="PROSITE-ProRule" id="PRU00076"/>
    </source>
</evidence>
<evidence type="ECO:0000255" key="5">
    <source>
        <dbReference type="PROSITE-ProRule" id="PRU00159"/>
    </source>
</evidence>
<evidence type="ECO:0000255" key="6">
    <source>
        <dbReference type="PROSITE-ProRule" id="PRU00316"/>
    </source>
</evidence>
<evidence type="ECO:0000255" key="7">
    <source>
        <dbReference type="PROSITE-ProRule" id="PRU10028"/>
    </source>
</evidence>
<organism>
    <name type="scientific">Bos taurus</name>
    <name type="common">Bovine</name>
    <dbReference type="NCBI Taxonomy" id="9913"/>
    <lineage>
        <taxon>Eukaryota</taxon>
        <taxon>Metazoa</taxon>
        <taxon>Chordata</taxon>
        <taxon>Craniata</taxon>
        <taxon>Vertebrata</taxon>
        <taxon>Euteleostomi</taxon>
        <taxon>Mammalia</taxon>
        <taxon>Eutheria</taxon>
        <taxon>Laurasiatheria</taxon>
        <taxon>Artiodactyla</taxon>
        <taxon>Ruminantia</taxon>
        <taxon>Pecora</taxon>
        <taxon>Bovidae</taxon>
        <taxon>Bovinae</taxon>
        <taxon>Bos</taxon>
    </lineage>
</organism>
<accession>Q06807</accession>
<keyword id="KW-0067">ATP-binding</keyword>
<keyword id="KW-0965">Cell junction</keyword>
<keyword id="KW-1003">Cell membrane</keyword>
<keyword id="KW-0963">Cytoplasm</keyword>
<keyword id="KW-0206">Cytoskeleton</keyword>
<keyword id="KW-1015">Disulfide bond</keyword>
<keyword id="KW-0245">EGF-like domain</keyword>
<keyword id="KW-0325">Glycoprotein</keyword>
<keyword id="KW-0393">Immunoglobulin domain</keyword>
<keyword id="KW-0418">Kinase</keyword>
<keyword id="KW-0472">Membrane</keyword>
<keyword id="KW-0547">Nucleotide-binding</keyword>
<keyword id="KW-0597">Phosphoprotein</keyword>
<keyword id="KW-0675">Receptor</keyword>
<keyword id="KW-1185">Reference proteome</keyword>
<keyword id="KW-0677">Repeat</keyword>
<keyword id="KW-0964">Secreted</keyword>
<keyword id="KW-0732">Signal</keyword>
<keyword id="KW-0808">Transferase</keyword>
<keyword id="KW-0812">Transmembrane</keyword>
<keyword id="KW-1133">Transmembrane helix</keyword>
<keyword id="KW-0829">Tyrosine-protein kinase</keyword>
<keyword id="KW-0832">Ubl conjugation</keyword>